<feature type="signal peptide" evidence="1">
    <location>
        <begin position="1"/>
        <end position="28"/>
    </location>
</feature>
<feature type="propeptide" id="PRO_0000028608" description="Activation peptide" evidence="4">
    <location>
        <begin position="29"/>
        <end position="223"/>
    </location>
</feature>
<feature type="chain" id="PRO_0000028609" description="Neutral protease B">
    <location>
        <begin position="224"/>
        <end position="538"/>
    </location>
</feature>
<feature type="region of interest" description="Disordered" evidence="3">
    <location>
        <begin position="421"/>
        <end position="441"/>
    </location>
</feature>
<feature type="active site" evidence="2">
    <location>
        <position position="370"/>
    </location>
</feature>
<feature type="active site" description="Proton donor" evidence="2">
    <location>
        <position position="453"/>
    </location>
</feature>
<feature type="binding site" evidence="1">
    <location>
        <position position="365"/>
    </location>
    <ligand>
        <name>Ca(2+)</name>
        <dbReference type="ChEBI" id="CHEBI:29108"/>
        <label>1</label>
    </ligand>
</feature>
<feature type="binding site" evidence="2 7">
    <location>
        <position position="369"/>
    </location>
    <ligand>
        <name>Zn(2+)</name>
        <dbReference type="ChEBI" id="CHEBI:29105"/>
        <note>catalytic</note>
    </ligand>
</feature>
<feature type="binding site" evidence="2 7">
    <location>
        <position position="373"/>
    </location>
    <ligand>
        <name>Zn(2+)</name>
        <dbReference type="ChEBI" id="CHEBI:29105"/>
        <note>catalytic</note>
    </ligand>
</feature>
<feature type="binding site" evidence="2 7">
    <location>
        <position position="393"/>
    </location>
    <ligand>
        <name>Zn(2+)</name>
        <dbReference type="ChEBI" id="CHEBI:29105"/>
        <note>catalytic</note>
    </ligand>
</feature>
<feature type="binding site" evidence="1">
    <location>
        <position position="404"/>
    </location>
    <ligand>
        <name>Ca(2+)</name>
        <dbReference type="ChEBI" id="CHEBI:29108"/>
        <label>1</label>
    </ligand>
</feature>
<feature type="binding site" evidence="1">
    <location>
        <position position="404"/>
    </location>
    <ligand>
        <name>Ca(2+)</name>
        <dbReference type="ChEBI" id="CHEBI:29108"/>
        <label>2</label>
    </ligand>
</feature>
<feature type="binding site" evidence="1">
    <location>
        <position position="406"/>
    </location>
    <ligand>
        <name>Ca(2+)</name>
        <dbReference type="ChEBI" id="CHEBI:29108"/>
        <label>2</label>
    </ligand>
</feature>
<feature type="binding site" evidence="1">
    <location>
        <position position="407"/>
    </location>
    <ligand>
        <name>Ca(2+)</name>
        <dbReference type="ChEBI" id="CHEBI:29108"/>
        <label>1</label>
    </ligand>
</feature>
<feature type="binding site" evidence="1">
    <location>
        <position position="407"/>
    </location>
    <ligand>
        <name>Ca(2+)</name>
        <dbReference type="ChEBI" id="CHEBI:29108"/>
        <label>2</label>
    </ligand>
</feature>
<feature type="binding site" evidence="1">
    <location>
        <position position="409"/>
    </location>
    <ligand>
        <name>Ca(2+)</name>
        <dbReference type="ChEBI" id="CHEBI:29108"/>
        <label>1</label>
    </ligand>
</feature>
<feature type="binding site" evidence="1">
    <location>
        <position position="412"/>
    </location>
    <ligand>
        <name>Ca(2+)</name>
        <dbReference type="ChEBI" id="CHEBI:29108"/>
        <label>1</label>
    </ligand>
</feature>
<feature type="binding site" evidence="1">
    <location>
        <position position="412"/>
    </location>
    <ligand>
        <name>Ca(2+)</name>
        <dbReference type="ChEBI" id="CHEBI:29108"/>
        <label>2</label>
    </ligand>
</feature>
<feature type="binding site" evidence="1">
    <location>
        <position position="415"/>
    </location>
    <ligand>
        <name>Ca(2+)</name>
        <dbReference type="ChEBI" id="CHEBI:29108"/>
        <label>3</label>
    </ligand>
</feature>
<feature type="binding site" evidence="1">
    <location>
        <position position="416"/>
    </location>
    <ligand>
        <name>Ca(2+)</name>
        <dbReference type="ChEBI" id="CHEBI:29108"/>
        <label>3</label>
    </ligand>
</feature>
<feature type="binding site" evidence="1">
    <location>
        <position position="419"/>
    </location>
    <ligand>
        <name>Ca(2+)</name>
        <dbReference type="ChEBI" id="CHEBI:29108"/>
        <label>3</label>
    </ligand>
</feature>
<feature type="binding site" evidence="1">
    <location>
        <position position="422"/>
    </location>
    <ligand>
        <name>Ca(2+)</name>
        <dbReference type="ChEBI" id="CHEBI:29108"/>
        <label>3</label>
    </ligand>
</feature>
<sequence>MRNLTKTSLLLAGLCTAAQMVFVTHASAEESIEYDHTYQTPSYIIEKSPQKPVQNTTQKESLFSYLDKHQTQFKLKGNANSHFRVSKTIKDPKTKQTFFKLTEVYKGIPIYGFEQAVAMKENKQVKSFFGKVHPQIKDVSVTPSISEKKAIHTARRELEASIGKIEYLDGEPKGELYIYPHDGEYDLAYLVRLSTSEPEPGYWHYFIDAKNGKVIESFNAIHEAAGTGIGVSGDEKSFDVTEQNGRFYLADETRGKGINTFDAKNLNETLFTLLSQLIGYTGKEIVSGTSVFNEPAAVDAHANAQAVYDYYSKTFGRDSFDQNGARITSTVHVGKQWNNAAWNGVQMVYGDGDGSKFKPLSGSLDIVAHEITHAVTQYSAGLLYQGEPGALNESISDIMGAMADRDDWEIGEDVYTPGIAGDSLRSLEDPSKQGNPDHYSNRYTGTEDYGGVHINSSIHNKAAYLLAEGGVHHGVQVEGIGREASEQIYYRALTYYVTASTDFSMMKQAAIEAANDLYGEGSKQSASVEKAYEAVGIL</sequence>
<accession>P39899</accession>
<name>NPRB_BACSU</name>
<dbReference type="EC" id="3.4.24.-" evidence="4"/>
<dbReference type="EMBL" id="M62845">
    <property type="protein sequence ID" value="AAA22626.1"/>
    <property type="molecule type" value="Genomic_DNA"/>
</dbReference>
<dbReference type="EMBL" id="Z79580">
    <property type="protein sequence ID" value="CAB01832.1"/>
    <property type="molecule type" value="Genomic_DNA"/>
</dbReference>
<dbReference type="EMBL" id="Y09476">
    <property type="protein sequence ID" value="CAA70628.1"/>
    <property type="molecule type" value="Genomic_DNA"/>
</dbReference>
<dbReference type="EMBL" id="AL009126">
    <property type="protein sequence ID" value="CAB12950.1"/>
    <property type="molecule type" value="Genomic_DNA"/>
</dbReference>
<dbReference type="PIR" id="A41042">
    <property type="entry name" value="A41042"/>
</dbReference>
<dbReference type="RefSeq" id="NP_388991.1">
    <property type="nucleotide sequence ID" value="NC_000964.3"/>
</dbReference>
<dbReference type="RefSeq" id="WP_009966979.1">
    <property type="nucleotide sequence ID" value="NZ_OZ025638.1"/>
</dbReference>
<dbReference type="SMR" id="P39899"/>
<dbReference type="FunCoup" id="P39899">
    <property type="interactions" value="94"/>
</dbReference>
<dbReference type="STRING" id="224308.BSU11100"/>
<dbReference type="MEROPS" id="M04.012"/>
<dbReference type="PaxDb" id="224308-BSU11100"/>
<dbReference type="EnsemblBacteria" id="CAB12950">
    <property type="protein sequence ID" value="CAB12950"/>
    <property type="gene ID" value="BSU_11100"/>
</dbReference>
<dbReference type="GeneID" id="936384"/>
<dbReference type="KEGG" id="bsu:BSU11100"/>
<dbReference type="PATRIC" id="fig|224308.179.peg.1192"/>
<dbReference type="eggNOG" id="COG3227">
    <property type="taxonomic scope" value="Bacteria"/>
</dbReference>
<dbReference type="InParanoid" id="P39899"/>
<dbReference type="OrthoDB" id="291295at2"/>
<dbReference type="PhylomeDB" id="P39899"/>
<dbReference type="BioCyc" id="BSUB:BSU11100-MONOMER"/>
<dbReference type="Proteomes" id="UP000001570">
    <property type="component" value="Chromosome"/>
</dbReference>
<dbReference type="GO" id="GO:0005576">
    <property type="term" value="C:extracellular region"/>
    <property type="evidence" value="ECO:0007669"/>
    <property type="project" value="UniProtKB-SubCell"/>
</dbReference>
<dbReference type="GO" id="GO:0046872">
    <property type="term" value="F:metal ion binding"/>
    <property type="evidence" value="ECO:0007669"/>
    <property type="project" value="UniProtKB-KW"/>
</dbReference>
<dbReference type="GO" id="GO:0004222">
    <property type="term" value="F:metalloendopeptidase activity"/>
    <property type="evidence" value="ECO:0007669"/>
    <property type="project" value="InterPro"/>
</dbReference>
<dbReference type="GO" id="GO:0006508">
    <property type="term" value="P:proteolysis"/>
    <property type="evidence" value="ECO:0000318"/>
    <property type="project" value="GO_Central"/>
</dbReference>
<dbReference type="CDD" id="cd09597">
    <property type="entry name" value="M4_TLP"/>
    <property type="match status" value="1"/>
</dbReference>
<dbReference type="FunFam" id="1.10.390.10:FF:000012">
    <property type="entry name" value="Thermolysin"/>
    <property type="match status" value="1"/>
</dbReference>
<dbReference type="Gene3D" id="3.10.170.10">
    <property type="match status" value="1"/>
</dbReference>
<dbReference type="Gene3D" id="3.10.450.40">
    <property type="match status" value="1"/>
</dbReference>
<dbReference type="Gene3D" id="3.10.450.490">
    <property type="match status" value="1"/>
</dbReference>
<dbReference type="Gene3D" id="1.10.390.10">
    <property type="entry name" value="Neutral Protease Domain 2"/>
    <property type="match status" value="1"/>
</dbReference>
<dbReference type="InterPro" id="IPR011096">
    <property type="entry name" value="FTP_domain"/>
</dbReference>
<dbReference type="InterPro" id="IPR025711">
    <property type="entry name" value="PepSY"/>
</dbReference>
<dbReference type="InterPro" id="IPR023612">
    <property type="entry name" value="Peptidase_M4"/>
</dbReference>
<dbReference type="InterPro" id="IPR027268">
    <property type="entry name" value="Peptidase_M4/M1_CTD_sf"/>
</dbReference>
<dbReference type="InterPro" id="IPR001570">
    <property type="entry name" value="Peptidase_M4_C_domain"/>
</dbReference>
<dbReference type="InterPro" id="IPR013856">
    <property type="entry name" value="Peptidase_M4_domain"/>
</dbReference>
<dbReference type="InterPro" id="IPR050728">
    <property type="entry name" value="Zinc_Metalloprotease_M4"/>
</dbReference>
<dbReference type="PANTHER" id="PTHR33794">
    <property type="entry name" value="BACILLOLYSIN"/>
    <property type="match status" value="1"/>
</dbReference>
<dbReference type="PANTHER" id="PTHR33794:SF3">
    <property type="entry name" value="NEUTRAL PROTEASE B"/>
    <property type="match status" value="1"/>
</dbReference>
<dbReference type="Pfam" id="PF07504">
    <property type="entry name" value="FTP"/>
    <property type="match status" value="1"/>
</dbReference>
<dbReference type="Pfam" id="PF03413">
    <property type="entry name" value="PepSY"/>
    <property type="match status" value="1"/>
</dbReference>
<dbReference type="Pfam" id="PF01447">
    <property type="entry name" value="Peptidase_M4"/>
    <property type="match status" value="1"/>
</dbReference>
<dbReference type="Pfam" id="PF02868">
    <property type="entry name" value="Peptidase_M4_C"/>
    <property type="match status" value="1"/>
</dbReference>
<dbReference type="PRINTS" id="PR00730">
    <property type="entry name" value="THERMOLYSIN"/>
</dbReference>
<dbReference type="SUPFAM" id="SSF55486">
    <property type="entry name" value="Metalloproteases ('zincins'), catalytic domain"/>
    <property type="match status" value="1"/>
</dbReference>
<dbReference type="PROSITE" id="PS00142">
    <property type="entry name" value="ZINC_PROTEASE"/>
    <property type="match status" value="1"/>
</dbReference>
<gene>
    <name evidence="5" type="primary">nprB</name>
    <name type="ordered locus">BSU11100</name>
</gene>
<proteinExistence type="evidence at protein level"/>
<evidence type="ECO:0000255" key="1"/>
<evidence type="ECO:0000255" key="2">
    <source>
        <dbReference type="PROSITE-ProRule" id="PRU10095"/>
    </source>
</evidence>
<evidence type="ECO:0000256" key="3">
    <source>
        <dbReference type="SAM" id="MobiDB-lite"/>
    </source>
</evidence>
<evidence type="ECO:0000269" key="4">
    <source>
    </source>
</evidence>
<evidence type="ECO:0000303" key="5">
    <source>
    </source>
</evidence>
<evidence type="ECO:0000305" key="6"/>
<evidence type="ECO:0000305" key="7">
    <source>
    </source>
</evidence>
<organism>
    <name type="scientific">Bacillus subtilis (strain 168)</name>
    <dbReference type="NCBI Taxonomy" id="224308"/>
    <lineage>
        <taxon>Bacteria</taxon>
        <taxon>Bacillati</taxon>
        <taxon>Bacillota</taxon>
        <taxon>Bacilli</taxon>
        <taxon>Bacillales</taxon>
        <taxon>Bacillaceae</taxon>
        <taxon>Bacillus</taxon>
    </lineage>
</organism>
<reference key="1">
    <citation type="journal article" date="1991" name="J. Bacteriol.">
        <title>Cloning and expression of a novel protease gene encoding an extracellular neutral protease from Bacillus subtilis.</title>
        <authorList>
            <person name="Tran L."/>
            <person name="Wu X.C."/>
            <person name="Wong S.L."/>
        </authorList>
    </citation>
    <scope>NUCLEOTIDE SEQUENCE [GENOMIC DNA]</scope>
    <scope>PROTEIN SEQUENCE OF 224-228</scope>
    <scope>FUNCTION</scope>
    <scope>CATALYTIC ACTIVITY</scope>
    <scope>COFACTOR</scope>
    <scope>BIOPHYSICOCHEMICAL PROPERTIES</scope>
    <scope>ACTIVITY REGULATION</scope>
    <scope>SUBCELLULAR LOCATION</scope>
    <scope>DISRUPTION PHENOTYPE</scope>
</reference>
<reference key="2">
    <citation type="journal article" date="1997" name="Microbiology">
        <title>A 10.3 kbp segment from nprB to argJ at the 102 degrees region of the Bacillus subtilis chromosome.</title>
        <authorList>
            <person name="Levine A."/>
            <person name="Vannier F."/>
            <person name="Roche B."/>
            <person name="Autret S."/>
            <person name="Mavel D."/>
            <person name="Seror S.J."/>
        </authorList>
    </citation>
    <scope>NUCLEOTIDE SEQUENCE [GENOMIC DNA]</scope>
    <source>
        <strain>168</strain>
    </source>
</reference>
<reference key="3">
    <citation type="journal article" date="1997" name="Microbiology">
        <title>Sequencing of regions downstream of addA (98 degrees) and citG (289 degrees) in Bacillus subtilis.</title>
        <authorList>
            <person name="Medina N."/>
            <person name="Vannier F."/>
            <person name="Roche B."/>
            <person name="Autret S."/>
            <person name="Levine A."/>
            <person name="Seror S.J."/>
        </authorList>
    </citation>
    <scope>NUCLEOTIDE SEQUENCE [GENOMIC DNA]</scope>
    <source>
        <strain>168</strain>
    </source>
</reference>
<reference key="4">
    <citation type="journal article" date="1997" name="Nature">
        <title>The complete genome sequence of the Gram-positive bacterium Bacillus subtilis.</title>
        <authorList>
            <person name="Kunst F."/>
            <person name="Ogasawara N."/>
            <person name="Moszer I."/>
            <person name="Albertini A.M."/>
            <person name="Alloni G."/>
            <person name="Azevedo V."/>
            <person name="Bertero M.G."/>
            <person name="Bessieres P."/>
            <person name="Bolotin A."/>
            <person name="Borchert S."/>
            <person name="Borriss R."/>
            <person name="Boursier L."/>
            <person name="Brans A."/>
            <person name="Braun M."/>
            <person name="Brignell S.C."/>
            <person name="Bron S."/>
            <person name="Brouillet S."/>
            <person name="Bruschi C.V."/>
            <person name="Caldwell B."/>
            <person name="Capuano V."/>
            <person name="Carter N.M."/>
            <person name="Choi S.-K."/>
            <person name="Codani J.-J."/>
            <person name="Connerton I.F."/>
            <person name="Cummings N.J."/>
            <person name="Daniel R.A."/>
            <person name="Denizot F."/>
            <person name="Devine K.M."/>
            <person name="Duesterhoeft A."/>
            <person name="Ehrlich S.D."/>
            <person name="Emmerson P.T."/>
            <person name="Entian K.-D."/>
            <person name="Errington J."/>
            <person name="Fabret C."/>
            <person name="Ferrari E."/>
            <person name="Foulger D."/>
            <person name="Fritz C."/>
            <person name="Fujita M."/>
            <person name="Fujita Y."/>
            <person name="Fuma S."/>
            <person name="Galizzi A."/>
            <person name="Galleron N."/>
            <person name="Ghim S.-Y."/>
            <person name="Glaser P."/>
            <person name="Goffeau A."/>
            <person name="Golightly E.J."/>
            <person name="Grandi G."/>
            <person name="Guiseppi G."/>
            <person name="Guy B.J."/>
            <person name="Haga K."/>
            <person name="Haiech J."/>
            <person name="Harwood C.R."/>
            <person name="Henaut A."/>
            <person name="Hilbert H."/>
            <person name="Holsappel S."/>
            <person name="Hosono S."/>
            <person name="Hullo M.-F."/>
            <person name="Itaya M."/>
            <person name="Jones L.-M."/>
            <person name="Joris B."/>
            <person name="Karamata D."/>
            <person name="Kasahara Y."/>
            <person name="Klaerr-Blanchard M."/>
            <person name="Klein C."/>
            <person name="Kobayashi Y."/>
            <person name="Koetter P."/>
            <person name="Koningstein G."/>
            <person name="Krogh S."/>
            <person name="Kumano M."/>
            <person name="Kurita K."/>
            <person name="Lapidus A."/>
            <person name="Lardinois S."/>
            <person name="Lauber J."/>
            <person name="Lazarevic V."/>
            <person name="Lee S.-M."/>
            <person name="Levine A."/>
            <person name="Liu H."/>
            <person name="Masuda S."/>
            <person name="Mauel C."/>
            <person name="Medigue C."/>
            <person name="Medina N."/>
            <person name="Mellado R.P."/>
            <person name="Mizuno M."/>
            <person name="Moestl D."/>
            <person name="Nakai S."/>
            <person name="Noback M."/>
            <person name="Noone D."/>
            <person name="O'Reilly M."/>
            <person name="Ogawa K."/>
            <person name="Ogiwara A."/>
            <person name="Oudega B."/>
            <person name="Park S.-H."/>
            <person name="Parro V."/>
            <person name="Pohl T.M."/>
            <person name="Portetelle D."/>
            <person name="Porwollik S."/>
            <person name="Prescott A.M."/>
            <person name="Presecan E."/>
            <person name="Pujic P."/>
            <person name="Purnelle B."/>
            <person name="Rapoport G."/>
            <person name="Rey M."/>
            <person name="Reynolds S."/>
            <person name="Rieger M."/>
            <person name="Rivolta C."/>
            <person name="Rocha E."/>
            <person name="Roche B."/>
            <person name="Rose M."/>
            <person name="Sadaie Y."/>
            <person name="Sato T."/>
            <person name="Scanlan E."/>
            <person name="Schleich S."/>
            <person name="Schroeter R."/>
            <person name="Scoffone F."/>
            <person name="Sekiguchi J."/>
            <person name="Sekowska A."/>
            <person name="Seror S.J."/>
            <person name="Serror P."/>
            <person name="Shin B.-S."/>
            <person name="Soldo B."/>
            <person name="Sorokin A."/>
            <person name="Tacconi E."/>
            <person name="Takagi T."/>
            <person name="Takahashi H."/>
            <person name="Takemaru K."/>
            <person name="Takeuchi M."/>
            <person name="Tamakoshi A."/>
            <person name="Tanaka T."/>
            <person name="Terpstra P."/>
            <person name="Tognoni A."/>
            <person name="Tosato V."/>
            <person name="Uchiyama S."/>
            <person name="Vandenbol M."/>
            <person name="Vannier F."/>
            <person name="Vassarotti A."/>
            <person name="Viari A."/>
            <person name="Wambutt R."/>
            <person name="Wedler E."/>
            <person name="Wedler H."/>
            <person name="Weitzenegger T."/>
            <person name="Winters P."/>
            <person name="Wipat A."/>
            <person name="Yamamoto H."/>
            <person name="Yamane K."/>
            <person name="Yasumoto K."/>
            <person name="Yata K."/>
            <person name="Yoshida K."/>
            <person name="Yoshikawa H.-F."/>
            <person name="Zumstein E."/>
            <person name="Yoshikawa H."/>
            <person name="Danchin A."/>
        </authorList>
    </citation>
    <scope>NUCLEOTIDE SEQUENCE [LARGE SCALE GENOMIC DNA]</scope>
    <source>
        <strain>168</strain>
    </source>
</reference>
<protein>
    <recommendedName>
        <fullName evidence="5">Neutral protease B</fullName>
        <ecNumber evidence="4">3.4.24.-</ecNumber>
    </recommendedName>
</protein>
<comment type="function">
    <text evidence="4">Protease able to cleave casein in vitro.</text>
</comment>
<comment type="cofactor">
    <cofactor evidence="4">
        <name>Zn(2+)</name>
        <dbReference type="ChEBI" id="CHEBI:29105"/>
    </cofactor>
    <text evidence="7">Binds 1 zinc ion per subunit.</text>
</comment>
<comment type="activity regulation">
    <text evidence="4">Protease activity can be inhibited in vitro by either a zinc specific chelator, 1,10-phenanthroline, or a metal chelator, EDTA. The enzyme is resistant to phenylmethylsulfonyl fluoride and iodoacetic acid.</text>
</comment>
<comment type="biophysicochemical properties">
    <phDependence>
        <text evidence="4">Optimum pH is 6.6.</text>
    </phDependence>
    <temperatureDependence>
        <text evidence="4">Retains 65% activity after treatment at 65 degrees Celsius for 20 minutes.</text>
    </temperatureDependence>
</comment>
<comment type="subcellular location">
    <subcellularLocation>
        <location evidence="4">Secreted</location>
    </subcellularLocation>
</comment>
<comment type="disruption phenotype">
    <text evidence="4">Cells lacking this gene grow normally in both LB and SG media, and no difference in sporulation frequency can be observed.</text>
</comment>
<comment type="similarity">
    <text evidence="6">Belongs to the peptidase M4 family.</text>
</comment>
<keyword id="KW-0106">Calcium</keyword>
<keyword id="KW-0903">Direct protein sequencing</keyword>
<keyword id="KW-0378">Hydrolase</keyword>
<keyword id="KW-0479">Metal-binding</keyword>
<keyword id="KW-0482">Metalloprotease</keyword>
<keyword id="KW-0645">Protease</keyword>
<keyword id="KW-1185">Reference proteome</keyword>
<keyword id="KW-0964">Secreted</keyword>
<keyword id="KW-0732">Signal</keyword>
<keyword id="KW-0862">Zinc</keyword>
<keyword id="KW-0865">Zymogen</keyword>